<feature type="chain" id="PRO_0000366340" description="Eukaryotic translation initiation factor 3 subunit A">
    <location>
        <begin position="1"/>
        <end position="1155"/>
    </location>
</feature>
<feature type="domain" description="PCI" evidence="2">
    <location>
        <begin position="319"/>
        <end position="502"/>
    </location>
</feature>
<feature type="region of interest" description="Disordered" evidence="3">
    <location>
        <begin position="589"/>
        <end position="613"/>
    </location>
</feature>
<feature type="region of interest" description="Disordered" evidence="3">
    <location>
        <begin position="836"/>
        <end position="1155"/>
    </location>
</feature>
<feature type="compositionally biased region" description="Basic and acidic residues" evidence="3">
    <location>
        <begin position="836"/>
        <end position="900"/>
    </location>
</feature>
<feature type="compositionally biased region" description="Basic and acidic residues" evidence="3">
    <location>
        <begin position="925"/>
        <end position="987"/>
    </location>
</feature>
<feature type="compositionally biased region" description="Basic and acidic residues" evidence="3">
    <location>
        <begin position="1004"/>
        <end position="1057"/>
    </location>
</feature>
<feature type="compositionally biased region" description="Basic and acidic residues" evidence="3">
    <location>
        <begin position="1066"/>
        <end position="1101"/>
    </location>
</feature>
<feature type="compositionally biased region" description="Gly residues" evidence="3">
    <location>
        <begin position="1104"/>
        <end position="1118"/>
    </location>
</feature>
<feature type="compositionally biased region" description="Basic and acidic residues" evidence="3">
    <location>
        <begin position="1125"/>
        <end position="1145"/>
    </location>
</feature>
<dbReference type="EMBL" id="CM000070">
    <property type="protein sequence ID" value="EAL28747.1"/>
    <property type="molecule type" value="Genomic_DNA"/>
</dbReference>
<dbReference type="SMR" id="Q295G5"/>
<dbReference type="FunCoup" id="Q295G5">
    <property type="interactions" value="2594"/>
</dbReference>
<dbReference type="STRING" id="46245.Q295G5"/>
<dbReference type="eggNOG" id="KOG2072">
    <property type="taxonomic scope" value="Eukaryota"/>
</dbReference>
<dbReference type="HOGENOM" id="CLU_002096_1_0_1"/>
<dbReference type="InParanoid" id="Q295G5"/>
<dbReference type="OMA" id="EHITNKR"/>
<dbReference type="PhylomeDB" id="Q295G5"/>
<dbReference type="ChiTaRS" id="eIF3-S10">
    <property type="organism name" value="fly"/>
</dbReference>
<dbReference type="Proteomes" id="UP000001819">
    <property type="component" value="Unplaced"/>
</dbReference>
<dbReference type="GO" id="GO:0016282">
    <property type="term" value="C:eukaryotic 43S preinitiation complex"/>
    <property type="evidence" value="ECO:0007669"/>
    <property type="project" value="UniProtKB-UniRule"/>
</dbReference>
<dbReference type="GO" id="GO:0033290">
    <property type="term" value="C:eukaryotic 48S preinitiation complex"/>
    <property type="evidence" value="ECO:0007669"/>
    <property type="project" value="UniProtKB-UniRule"/>
</dbReference>
<dbReference type="GO" id="GO:0005852">
    <property type="term" value="C:eukaryotic translation initiation factor 3 complex"/>
    <property type="evidence" value="ECO:0000250"/>
    <property type="project" value="UniProtKB"/>
</dbReference>
<dbReference type="GO" id="GO:0071540">
    <property type="term" value="C:eukaryotic translation initiation factor 3 complex, eIF3e"/>
    <property type="evidence" value="ECO:0007669"/>
    <property type="project" value="TreeGrafter"/>
</dbReference>
<dbReference type="GO" id="GO:0071541">
    <property type="term" value="C:eukaryotic translation initiation factor 3 complex, eIF3m"/>
    <property type="evidence" value="ECO:0007669"/>
    <property type="project" value="TreeGrafter"/>
</dbReference>
<dbReference type="GO" id="GO:0043614">
    <property type="term" value="C:multi-eIF complex"/>
    <property type="evidence" value="ECO:0007669"/>
    <property type="project" value="TreeGrafter"/>
</dbReference>
<dbReference type="GO" id="GO:0003729">
    <property type="term" value="F:mRNA binding"/>
    <property type="evidence" value="ECO:0007669"/>
    <property type="project" value="TreeGrafter"/>
</dbReference>
<dbReference type="GO" id="GO:0003743">
    <property type="term" value="F:translation initiation factor activity"/>
    <property type="evidence" value="ECO:0000250"/>
    <property type="project" value="UniProtKB"/>
</dbReference>
<dbReference type="GO" id="GO:0001732">
    <property type="term" value="P:formation of cytoplasmic translation initiation complex"/>
    <property type="evidence" value="ECO:0007669"/>
    <property type="project" value="UniProtKB-UniRule"/>
</dbReference>
<dbReference type="GO" id="GO:0006446">
    <property type="term" value="P:regulation of translational initiation"/>
    <property type="evidence" value="ECO:0000250"/>
    <property type="project" value="UniProtKB"/>
</dbReference>
<dbReference type="GO" id="GO:0002188">
    <property type="term" value="P:translation reinitiation"/>
    <property type="evidence" value="ECO:0007669"/>
    <property type="project" value="TreeGrafter"/>
</dbReference>
<dbReference type="FunFam" id="1.25.40.860:FF:000007">
    <property type="entry name" value="Eukaryotic translation initiation factor 3 subunit A"/>
    <property type="match status" value="1"/>
</dbReference>
<dbReference type="FunFam" id="4.10.860.10:FF:000001">
    <property type="entry name" value="Eukaryotic translation initiation factor 3 subunit A"/>
    <property type="match status" value="1"/>
</dbReference>
<dbReference type="Gene3D" id="1.25.40.860">
    <property type="match status" value="2"/>
</dbReference>
<dbReference type="Gene3D" id="4.10.860.10">
    <property type="entry name" value="UVR domain"/>
    <property type="match status" value="1"/>
</dbReference>
<dbReference type="HAMAP" id="MF_03000">
    <property type="entry name" value="eIF3a"/>
    <property type="match status" value="1"/>
</dbReference>
<dbReference type="InterPro" id="IPR027512">
    <property type="entry name" value="EIF3A"/>
</dbReference>
<dbReference type="InterPro" id="IPR054711">
    <property type="entry name" value="eIF3a_PCI_TPR-like"/>
</dbReference>
<dbReference type="InterPro" id="IPR000717">
    <property type="entry name" value="PCI_dom"/>
</dbReference>
<dbReference type="PANTHER" id="PTHR14005:SF0">
    <property type="entry name" value="EUKARYOTIC TRANSLATION INITIATION FACTOR 3 SUBUNIT A"/>
    <property type="match status" value="1"/>
</dbReference>
<dbReference type="PANTHER" id="PTHR14005">
    <property type="entry name" value="EUKARYOTIC TRANSLATION INITIATION FACTOR 3, THETA SUBUNIT"/>
    <property type="match status" value="1"/>
</dbReference>
<dbReference type="Pfam" id="PF22591">
    <property type="entry name" value="eIF3a_PCI_TPR-like"/>
    <property type="match status" value="1"/>
</dbReference>
<dbReference type="Pfam" id="PF01399">
    <property type="entry name" value="PCI"/>
    <property type="match status" value="1"/>
</dbReference>
<dbReference type="SMART" id="SM00088">
    <property type="entry name" value="PINT"/>
    <property type="match status" value="1"/>
</dbReference>
<dbReference type="PROSITE" id="PS50250">
    <property type="entry name" value="PCI"/>
    <property type="match status" value="1"/>
</dbReference>
<keyword id="KW-0963">Cytoplasm</keyword>
<keyword id="KW-0396">Initiation factor</keyword>
<keyword id="KW-0648">Protein biosynthesis</keyword>
<keyword id="KW-1185">Reference proteome</keyword>
<keyword id="KW-0694">RNA-binding</keyword>
<accession>Q295G5</accession>
<protein>
    <recommendedName>
        <fullName evidence="1">Eukaryotic translation initiation factor 3 subunit A</fullName>
        <shortName evidence="1">eIF3a</shortName>
    </recommendedName>
    <alternativeName>
        <fullName evidence="1">Eukaryotic translation initiation factor 3 subunit 10</fullName>
    </alternativeName>
</protein>
<proteinExistence type="inferred from homology"/>
<comment type="function">
    <text evidence="1">RNA-binding component of the eukaryotic translation initiation factor 3 (eIF-3) complex, which is involved in protein synthesis of a specialized repertoire of mRNAs and, together with other initiation factors, stimulates binding of mRNA and methionyl-tRNAi to the 40S ribosome. The eIF-3 complex specifically targets and initiates translation of a subset of mRNAs involved in cell proliferation.</text>
</comment>
<comment type="subunit">
    <text evidence="1">Component of the eukaryotic translation initiation factor 3 (eIF-3) complex. The eIF-3 complex interacts with pix.</text>
</comment>
<comment type="subcellular location">
    <subcellularLocation>
        <location evidence="1">Cytoplasm</location>
    </subcellularLocation>
</comment>
<comment type="similarity">
    <text evidence="1">Belongs to the eIF-3 subunit A family.</text>
</comment>
<gene>
    <name evidence="1" type="primary">eIF3-S10</name>
    <name type="ORF">GA22048</name>
</gene>
<reference key="1">
    <citation type="journal article" date="2005" name="Genome Res.">
        <title>Comparative genome sequencing of Drosophila pseudoobscura: chromosomal, gene, and cis-element evolution.</title>
        <authorList>
            <person name="Richards S."/>
            <person name="Liu Y."/>
            <person name="Bettencourt B.R."/>
            <person name="Hradecky P."/>
            <person name="Letovsky S."/>
            <person name="Nielsen R."/>
            <person name="Thornton K."/>
            <person name="Hubisz M.J."/>
            <person name="Chen R."/>
            <person name="Meisel R.P."/>
            <person name="Couronne O."/>
            <person name="Hua S."/>
            <person name="Smith M.A."/>
            <person name="Zhang P."/>
            <person name="Liu J."/>
            <person name="Bussemaker H.J."/>
            <person name="van Batenburg M.F."/>
            <person name="Howells S.L."/>
            <person name="Scherer S.E."/>
            <person name="Sodergren E."/>
            <person name="Matthews B.B."/>
            <person name="Crosby M.A."/>
            <person name="Schroeder A.J."/>
            <person name="Ortiz-Barrientos D."/>
            <person name="Rives C.M."/>
            <person name="Metzker M.L."/>
            <person name="Muzny D.M."/>
            <person name="Scott G."/>
            <person name="Steffen D."/>
            <person name="Wheeler D.A."/>
            <person name="Worley K.C."/>
            <person name="Havlak P."/>
            <person name="Durbin K.J."/>
            <person name="Egan A."/>
            <person name="Gill R."/>
            <person name="Hume J."/>
            <person name="Morgan M.B."/>
            <person name="Miner G."/>
            <person name="Hamilton C."/>
            <person name="Huang Y."/>
            <person name="Waldron L."/>
            <person name="Verduzco D."/>
            <person name="Clerc-Blankenburg K.P."/>
            <person name="Dubchak I."/>
            <person name="Noor M.A.F."/>
            <person name="Anderson W."/>
            <person name="White K.P."/>
            <person name="Clark A.G."/>
            <person name="Schaeffer S.W."/>
            <person name="Gelbart W.M."/>
            <person name="Weinstock G.M."/>
            <person name="Gibbs R.A."/>
        </authorList>
    </citation>
    <scope>NUCLEOTIDE SEQUENCE [LARGE SCALE GENOMIC DNA]</scope>
    <source>
        <strain>MV2-25 / Tucson 14011-0121.94</strain>
    </source>
</reference>
<name>EIF3A_DROPS</name>
<sequence>MARYTQRPENALKRANEFIEVGKPLRALDTLQEVFRNKRWNYAYSETVIEPLMFKYLYLCVELKKSHIAKEGLFQYRNMFQLVNVNSLENVIRGYLKMAEEHTEAAQAQSSAAVAVLELDDLDNIATPESILMSAVCGEDAQDRSDRTILLPWVKFLWESYCQCLELLRVNTHCEALYHDIARMAFQFCLKYNRKSEFRRLCDKLRKHLEDICKSSNQTTGVSINKVETQQLCLDTRLYLLDSAIQMELWQEAYKAIEDIHGLMALSKKTPVPKTMANYYQKLAMVFSKAGNQLFHAAALLKLFQLTRELKKNLTKDDLQRMAAHVLLATLSIPLPSAHPEFDRFIEADKSPLEKAQKLAVLLGLPQPPTRVSLIREVVRLNVPQLVSEDFRNLYNWLEVDFNPLNLCKRIQSIVDIIETGPTETNLLSPYIQSLKDVTIMRLIRQISQVYESIEFKRLLELATFCNIFELEKLLVESVRHNDMQIRIDHQKNSIYFGTDLTESQREYRPDGPALQSMPSEQIRSQLVNMSTVLTRAVSIVYPNRERDQRAKLRTQMVHHYHEIKDREHQRILQRQKIIEDRKEYIEKQNNAREEEEARRQEEESRKAKLAEQKRLELEQEERERKRHQNEIQAIKEKSLKEKVQQISQTAHGKKMLSKLDEEGIKKLDAEQIAKRESEELQREAKELQSKLKSQEKKIDYYERAKRLEEIPLFEKYLAEKQVKDKEFWEATEKTRIENAIAERKDAVSQQERLKRMYPDRDEFLEALKKERASLYVEKLKKFEIALEAERKKRLADRVIRRREERRQAFLREKEEERLRKEEEIRLAQAAEERAAAEARRLEREAEDEKRRAQYEKQRAKEEEAERKIKEDRDRLAREVAVERERSDKERDTWRPRGGDRPSAASAGGGGGAGEWRRAAAPIGDRNERAGDRIERGGERMERGGDRMERGGDRMERGGERTEHRDRERRDNEGADSSWRVRREPDSQRGAGVKDASGSAAPPSRDDKWRRGGDRDRDRDRDFRNDGPRRDRDDRDDRDRGGFRRNDGPRRNDDAAPRETGGNWRDAPRQSDRDNRRPAGDRRDREVRGGDLRGPESRAPKEGGPSGGTGTAASGGGNWRTAPGPRDEPAPKRDQPQDKENKAVDDGEWTSVKRR</sequence>
<organism>
    <name type="scientific">Drosophila pseudoobscura pseudoobscura</name>
    <name type="common">Fruit fly</name>
    <dbReference type="NCBI Taxonomy" id="46245"/>
    <lineage>
        <taxon>Eukaryota</taxon>
        <taxon>Metazoa</taxon>
        <taxon>Ecdysozoa</taxon>
        <taxon>Arthropoda</taxon>
        <taxon>Hexapoda</taxon>
        <taxon>Insecta</taxon>
        <taxon>Pterygota</taxon>
        <taxon>Neoptera</taxon>
        <taxon>Endopterygota</taxon>
        <taxon>Diptera</taxon>
        <taxon>Brachycera</taxon>
        <taxon>Muscomorpha</taxon>
        <taxon>Ephydroidea</taxon>
        <taxon>Drosophilidae</taxon>
        <taxon>Drosophila</taxon>
        <taxon>Sophophora</taxon>
    </lineage>
</organism>
<evidence type="ECO:0000255" key="1">
    <source>
        <dbReference type="HAMAP-Rule" id="MF_03000"/>
    </source>
</evidence>
<evidence type="ECO:0000255" key="2">
    <source>
        <dbReference type="PROSITE-ProRule" id="PRU01185"/>
    </source>
</evidence>
<evidence type="ECO:0000256" key="3">
    <source>
        <dbReference type="SAM" id="MobiDB-lite"/>
    </source>
</evidence>